<sequence>MLWRQLIYWQLLALFFLPFCLCQDEYMESPQTGGLPPDCSKCCHGDYSFRGYQGPPGPPGPPGIPGNHGNNGNNGATGHEGAKGEKGDKGDLGPRGERGQHGPKGEKGYPGIPPELQIAFMASLATHFSNQNSGIIFSSVETNIGNFFDVMTGRFGAPVSGVYFFTFSMMKHEDVEEVYVYLMHNGNTVFSMYSYEMKGKSDTSSNHAVLKLAKGDEVWLRMGNGALHGDHQRFSTFAGFLLFETK</sequence>
<protein>
    <recommendedName>
        <fullName>Complement C1q tumor necrosis factor-related protein 3</fullName>
    </recommendedName>
    <alternativeName>
        <fullName>Collagenous repeat-containing sequence 26 kDa protein</fullName>
        <shortName>CORS26</shortName>
    </alternativeName>
    <alternativeName>
        <fullName>Secretory protein CORS26</fullName>
    </alternativeName>
</protein>
<dbReference type="EMBL" id="AF329837">
    <property type="protein sequence ID" value="AAK17961.1"/>
    <property type="molecule type" value="mRNA"/>
</dbReference>
<dbReference type="EMBL" id="AF326976">
    <property type="protein sequence ID" value="AAK70344.1"/>
    <property type="molecule type" value="mRNA"/>
</dbReference>
<dbReference type="EMBL" id="EU399231">
    <property type="protein sequence ID" value="ABY86416.1"/>
    <property type="molecule type" value="mRNA"/>
</dbReference>
<dbReference type="EMBL" id="EU399232">
    <property type="protein sequence ID" value="ABY86417.1"/>
    <property type="molecule type" value="mRNA"/>
</dbReference>
<dbReference type="EMBL" id="AY358388">
    <property type="protein sequence ID" value="AAQ88754.1"/>
    <property type="molecule type" value="mRNA"/>
</dbReference>
<dbReference type="EMBL" id="AK295968">
    <property type="protein sequence ID" value="BAG58744.1"/>
    <property type="molecule type" value="mRNA"/>
</dbReference>
<dbReference type="EMBL" id="AK315921">
    <property type="protein sequence ID" value="BAH14292.1"/>
    <property type="molecule type" value="mRNA"/>
</dbReference>
<dbReference type="EMBL" id="AK075533">
    <property type="protein sequence ID" value="BAC11676.1"/>
    <property type="molecule type" value="mRNA"/>
</dbReference>
<dbReference type="EMBL" id="BX640995">
    <property type="protein sequence ID" value="CAE45998.1"/>
    <property type="molecule type" value="mRNA"/>
</dbReference>
<dbReference type="EMBL" id="AC139783">
    <property type="status" value="NOT_ANNOTATED_CDS"/>
    <property type="molecule type" value="Genomic_DNA"/>
</dbReference>
<dbReference type="EMBL" id="AC139792">
    <property type="status" value="NOT_ANNOTATED_CDS"/>
    <property type="molecule type" value="Genomic_DNA"/>
</dbReference>
<dbReference type="EMBL" id="CH471118">
    <property type="protein sequence ID" value="EAX10820.1"/>
    <property type="molecule type" value="Genomic_DNA"/>
</dbReference>
<dbReference type="EMBL" id="BC112925">
    <property type="protein sequence ID" value="AAI12926.1"/>
    <property type="molecule type" value="mRNA"/>
</dbReference>
<dbReference type="EMBL" id="BC120990">
    <property type="protein sequence ID" value="AAI20991.1"/>
    <property type="molecule type" value="mRNA"/>
</dbReference>
<dbReference type="EMBL" id="AF173888">
    <property type="protein sequence ID" value="AAQ13635.1"/>
    <property type="molecule type" value="mRNA"/>
</dbReference>
<dbReference type="CCDS" id="CCDS34141.1">
    <molecule id="Q9BXJ4-3"/>
</dbReference>
<dbReference type="CCDS" id="CCDS3904.1">
    <molecule id="Q9BXJ4-1"/>
</dbReference>
<dbReference type="RefSeq" id="NP_112207.1">
    <molecule id="Q9BXJ4-1"/>
    <property type="nucleotide sequence ID" value="NM_030945.4"/>
</dbReference>
<dbReference type="RefSeq" id="NP_852100.3">
    <molecule id="Q9BXJ4-3"/>
    <property type="nucleotide sequence ID" value="NM_181435.6"/>
</dbReference>
<dbReference type="SMR" id="Q9BXJ4"/>
<dbReference type="BioGRID" id="125390">
    <property type="interactions" value="12"/>
</dbReference>
<dbReference type="FunCoup" id="Q9BXJ4">
    <property type="interactions" value="44"/>
</dbReference>
<dbReference type="IntAct" id="Q9BXJ4">
    <property type="interactions" value="10"/>
</dbReference>
<dbReference type="STRING" id="9606.ENSP00000371497"/>
<dbReference type="GlyCosmos" id="Q9BXJ4">
    <property type="glycosylation" value="1 site, No reported glycans"/>
</dbReference>
<dbReference type="GlyGen" id="Q9BXJ4">
    <property type="glycosylation" value="1 site"/>
</dbReference>
<dbReference type="iPTMnet" id="Q9BXJ4"/>
<dbReference type="PhosphoSitePlus" id="Q9BXJ4"/>
<dbReference type="BioMuta" id="C1QTNF3"/>
<dbReference type="jPOST" id="Q9BXJ4"/>
<dbReference type="MassIVE" id="Q9BXJ4"/>
<dbReference type="PeptideAtlas" id="Q9BXJ4"/>
<dbReference type="ProteomicsDB" id="79436">
    <molecule id="Q9BXJ4-1"/>
</dbReference>
<dbReference type="ProteomicsDB" id="79437">
    <molecule id="Q9BXJ4-2"/>
</dbReference>
<dbReference type="ProteomicsDB" id="79438">
    <molecule id="Q9BXJ4-3"/>
</dbReference>
<dbReference type="Pumba" id="Q9BXJ4"/>
<dbReference type="Antibodypedia" id="3524">
    <property type="antibodies" value="146 antibodies from 31 providers"/>
</dbReference>
<dbReference type="DNASU" id="114899"/>
<dbReference type="Ensembl" id="ENST00000231338.7">
    <molecule id="Q9BXJ4-1"/>
    <property type="protein sequence ID" value="ENSP00000231338.7"/>
    <property type="gene ID" value="ENSG00000082196.21"/>
</dbReference>
<dbReference type="Ensembl" id="ENST00000382065.8">
    <molecule id="Q9BXJ4-3"/>
    <property type="protein sequence ID" value="ENSP00000371497.3"/>
    <property type="gene ID" value="ENSG00000082196.21"/>
</dbReference>
<dbReference type="GeneID" id="114899"/>
<dbReference type="KEGG" id="hsa:114899"/>
<dbReference type="MANE-Select" id="ENST00000382065.8">
    <molecule id="Q9BXJ4-3"/>
    <property type="protein sequence ID" value="ENSP00000371497.3"/>
    <property type="RefSeq nucleotide sequence ID" value="NM_181435.6"/>
    <property type="RefSeq protein sequence ID" value="NP_852100.3"/>
</dbReference>
<dbReference type="UCSC" id="uc003jin.4">
    <molecule id="Q9BXJ4-1"/>
    <property type="organism name" value="human"/>
</dbReference>
<dbReference type="AGR" id="HGNC:14326"/>
<dbReference type="CTD" id="114899"/>
<dbReference type="DisGeNET" id="114899"/>
<dbReference type="GeneCards" id="C1QTNF3"/>
<dbReference type="HGNC" id="HGNC:14326">
    <property type="gene designation" value="C1QTNF3"/>
</dbReference>
<dbReference type="HPA" id="ENSG00000082196">
    <property type="expression patterns" value="Tissue enhanced (esophagus, salivary gland)"/>
</dbReference>
<dbReference type="MIM" id="612045">
    <property type="type" value="gene"/>
</dbReference>
<dbReference type="neXtProt" id="NX_Q9BXJ4"/>
<dbReference type="OpenTargets" id="ENSG00000082196"/>
<dbReference type="PharmGKB" id="PA25630"/>
<dbReference type="VEuPathDB" id="HostDB:ENSG00000082196"/>
<dbReference type="eggNOG" id="ENOG502QSK2">
    <property type="taxonomic scope" value="Eukaryota"/>
</dbReference>
<dbReference type="GeneTree" id="ENSGT00940000161378"/>
<dbReference type="HOGENOM" id="CLU_001074_0_1_1"/>
<dbReference type="InParanoid" id="Q9BXJ4"/>
<dbReference type="OMA" id="TTFSGYM"/>
<dbReference type="OrthoDB" id="6154955at2759"/>
<dbReference type="PAN-GO" id="Q9BXJ4">
    <property type="GO annotations" value="1 GO annotation based on evolutionary models"/>
</dbReference>
<dbReference type="PhylomeDB" id="Q9BXJ4"/>
<dbReference type="TreeFam" id="TF329591"/>
<dbReference type="PathwayCommons" id="Q9BXJ4"/>
<dbReference type="SignaLink" id="Q9BXJ4"/>
<dbReference type="BioGRID-ORCS" id="114899">
    <property type="hits" value="8 hits in 1142 CRISPR screens"/>
</dbReference>
<dbReference type="ChiTaRS" id="C1QTNF3">
    <property type="organism name" value="human"/>
</dbReference>
<dbReference type="GeneWiki" id="C1QTNF3"/>
<dbReference type="GenomeRNAi" id="114899"/>
<dbReference type="Pharos" id="Q9BXJ4">
    <property type="development level" value="Tbio"/>
</dbReference>
<dbReference type="PRO" id="PR:Q9BXJ4"/>
<dbReference type="Proteomes" id="UP000005640">
    <property type="component" value="Chromosome 5"/>
</dbReference>
<dbReference type="RNAct" id="Q9BXJ4">
    <property type="molecule type" value="protein"/>
</dbReference>
<dbReference type="Bgee" id="ENSG00000082196">
    <property type="expression patterns" value="Expressed in parotid gland and 163 other cell types or tissues"/>
</dbReference>
<dbReference type="GO" id="GO:0005581">
    <property type="term" value="C:collagen trimer"/>
    <property type="evidence" value="ECO:0007669"/>
    <property type="project" value="UniProtKB-KW"/>
</dbReference>
<dbReference type="GO" id="GO:0070062">
    <property type="term" value="C:extracellular exosome"/>
    <property type="evidence" value="ECO:0007005"/>
    <property type="project" value="UniProtKB"/>
</dbReference>
<dbReference type="GO" id="GO:0016020">
    <property type="term" value="C:membrane"/>
    <property type="evidence" value="ECO:0007005"/>
    <property type="project" value="UniProtKB"/>
</dbReference>
<dbReference type="GO" id="GO:0042802">
    <property type="term" value="F:identical protein binding"/>
    <property type="evidence" value="ECO:0000353"/>
    <property type="project" value="UniProtKB"/>
</dbReference>
<dbReference type="GO" id="GO:0045444">
    <property type="term" value="P:fat cell differentiation"/>
    <property type="evidence" value="ECO:0000270"/>
    <property type="project" value="UniProtKB"/>
</dbReference>
<dbReference type="GO" id="GO:0035356">
    <property type="term" value="P:intracellular triglyceride homeostasis"/>
    <property type="evidence" value="ECO:0000314"/>
    <property type="project" value="UniProtKB"/>
</dbReference>
<dbReference type="GO" id="GO:0010629">
    <property type="term" value="P:negative regulation of gene expression"/>
    <property type="evidence" value="ECO:0000314"/>
    <property type="project" value="UniProtKB"/>
</dbReference>
<dbReference type="GO" id="GO:0045721">
    <property type="term" value="P:negative regulation of gluconeogenesis"/>
    <property type="evidence" value="ECO:0000314"/>
    <property type="project" value="UniProtKB"/>
</dbReference>
<dbReference type="GO" id="GO:0050728">
    <property type="term" value="P:negative regulation of inflammatory response"/>
    <property type="evidence" value="ECO:0000314"/>
    <property type="project" value="UniProtKB"/>
</dbReference>
<dbReference type="GO" id="GO:0032715">
    <property type="term" value="P:negative regulation of interleukin-6 production"/>
    <property type="evidence" value="ECO:0000314"/>
    <property type="project" value="UniProtKB"/>
</dbReference>
<dbReference type="GO" id="GO:0071638">
    <property type="term" value="P:negative regulation of monocyte chemotactic protein-1 production"/>
    <property type="evidence" value="ECO:0000314"/>
    <property type="project" value="UniProtKB"/>
</dbReference>
<dbReference type="GO" id="GO:1901223">
    <property type="term" value="P:negative regulation of non-canonical NF-kappaB signal transduction"/>
    <property type="evidence" value="ECO:0000314"/>
    <property type="project" value="UniProtKB"/>
</dbReference>
<dbReference type="GO" id="GO:0070165">
    <property type="term" value="P:positive regulation of adiponectin secretion"/>
    <property type="evidence" value="ECO:0000314"/>
    <property type="project" value="UniProtKB"/>
</dbReference>
<dbReference type="GO" id="GO:0001819">
    <property type="term" value="P:positive regulation of cytokine production"/>
    <property type="evidence" value="ECO:0000314"/>
    <property type="project" value="UniProtKB"/>
</dbReference>
<dbReference type="FunFam" id="2.60.120.40:FF:000006">
    <property type="entry name" value="complement C1q tumor necrosis factor-related protein 3 isoform X2"/>
    <property type="match status" value="1"/>
</dbReference>
<dbReference type="Gene3D" id="2.60.120.40">
    <property type="match status" value="1"/>
</dbReference>
<dbReference type="InterPro" id="IPR001073">
    <property type="entry name" value="C1q_dom"/>
</dbReference>
<dbReference type="InterPro" id="IPR008160">
    <property type="entry name" value="Collagen"/>
</dbReference>
<dbReference type="InterPro" id="IPR050392">
    <property type="entry name" value="Collagen/C1q_domain"/>
</dbReference>
<dbReference type="InterPro" id="IPR008983">
    <property type="entry name" value="Tumour_necrosis_fac-like_dom"/>
</dbReference>
<dbReference type="PANTHER" id="PTHR15427:SF52">
    <property type="entry name" value="C1Q DOMAIN-CONTAINING PROTEIN"/>
    <property type="match status" value="1"/>
</dbReference>
<dbReference type="PANTHER" id="PTHR15427">
    <property type="entry name" value="EMILIN ELASTIN MICROFIBRIL INTERFACE-LOCATED PROTEIN ELASTIN MICROFIBRIL INTERFACER"/>
    <property type="match status" value="1"/>
</dbReference>
<dbReference type="Pfam" id="PF00386">
    <property type="entry name" value="C1q"/>
    <property type="match status" value="1"/>
</dbReference>
<dbReference type="Pfam" id="PF01391">
    <property type="entry name" value="Collagen"/>
    <property type="match status" value="1"/>
</dbReference>
<dbReference type="PRINTS" id="PR00007">
    <property type="entry name" value="COMPLEMNTC1Q"/>
</dbReference>
<dbReference type="SMART" id="SM00110">
    <property type="entry name" value="C1Q"/>
    <property type="match status" value="1"/>
</dbReference>
<dbReference type="SUPFAM" id="SSF49842">
    <property type="entry name" value="TNF-like"/>
    <property type="match status" value="1"/>
</dbReference>
<dbReference type="PROSITE" id="PS50871">
    <property type="entry name" value="C1Q"/>
    <property type="match status" value="1"/>
</dbReference>
<accession>Q9BXJ4</accession>
<accession>Q0VAN4</accession>
<accession>Q542Y2</accession>
<accession>Q6MZN1</accession>
<accession>Q96KY1</accession>
<gene>
    <name type="primary">C1QTNF3</name>
    <name type="synonym">CTRP3</name>
    <name type="ORF">UNQ753/PRO1484</name>
</gene>
<name>C1QT3_HUMAN</name>
<comment type="interaction">
    <interactant intactId="EBI-10697546">
        <id>Q9BXJ4</id>
    </interactant>
    <interactant intactId="EBI-10263496">
        <id>Q8IYK4</id>
        <label>COLGALT2</label>
    </interactant>
    <organismsDiffer>false</organismsDiffer>
    <experiments>2</experiments>
</comment>
<comment type="interaction">
    <interactant intactId="EBI-10697546">
        <id>Q9BXJ4</id>
    </interactant>
    <interactant intactId="EBI-466029">
        <id>P42858</id>
        <label>HTT</label>
    </interactant>
    <organismsDiffer>false</organismsDiffer>
    <experiments>3</experiments>
</comment>
<comment type="subcellular location">
    <subcellularLocation>
        <location evidence="9">Secreted</location>
    </subcellularLocation>
</comment>
<comment type="alternative products">
    <event type="alternative splicing"/>
    <isoform>
        <id>Q9BXJ4-1</id>
        <name>1</name>
        <sequence type="displayed"/>
    </isoform>
    <isoform>
        <id>Q9BXJ4-2</id>
        <name>2</name>
        <sequence type="described" ref="VSP_011624 VSP_011625"/>
    </isoform>
    <isoform>
        <id>Q9BXJ4-3</id>
        <name>3</name>
        <sequence type="described" ref="VSP_043157"/>
    </isoform>
</comment>
<comment type="tissue specificity">
    <text evidence="4">Expressed in colon and small intestine.</text>
</comment>
<comment type="PTM">
    <molecule>Isoform 3</molecule>
    <text>Glycosylated on Asn-70.</text>
</comment>
<organism>
    <name type="scientific">Homo sapiens</name>
    <name type="common">Human</name>
    <dbReference type="NCBI Taxonomy" id="9606"/>
    <lineage>
        <taxon>Eukaryota</taxon>
        <taxon>Metazoa</taxon>
        <taxon>Chordata</taxon>
        <taxon>Craniata</taxon>
        <taxon>Vertebrata</taxon>
        <taxon>Euteleostomi</taxon>
        <taxon>Mammalia</taxon>
        <taxon>Eutheria</taxon>
        <taxon>Euarchontoglires</taxon>
        <taxon>Primates</taxon>
        <taxon>Haplorrhini</taxon>
        <taxon>Catarrhini</taxon>
        <taxon>Hominidae</taxon>
        <taxon>Homo</taxon>
    </lineage>
</organism>
<keyword id="KW-0025">Alternative splicing</keyword>
<keyword id="KW-0176">Collagen</keyword>
<keyword id="KW-0325">Glycoprotein</keyword>
<keyword id="KW-1267">Proteomics identification</keyword>
<keyword id="KW-1185">Reference proteome</keyword>
<keyword id="KW-0964">Secreted</keyword>
<keyword id="KW-0732">Signal</keyword>
<reference key="1">
    <citation type="submission" date="2000-12" db="EMBL/GenBank/DDBJ databases">
        <title>Homo sapiens complement-c1q tumor necrosis factor-related protein.</title>
        <authorList>
            <person name="Piddington C.S."/>
            <person name="Bishop P."/>
        </authorList>
    </citation>
    <scope>NUCLEOTIDE SEQUENCE [MRNA] (ISOFORM 1)</scope>
</reference>
<reference key="2">
    <citation type="submission" date="2000-12" db="EMBL/GenBank/DDBJ databases">
        <title>Molecular cloning, chromosomal localization, and genomic structure of the human CORS26 gene.</title>
        <authorList>
            <person name="Maeda T."/>
            <person name="Hayashi A."/>
            <person name="Saito T."/>
        </authorList>
    </citation>
    <scope>NUCLEOTIDE SEQUENCE [MRNA] (ISOFORM 1)</scope>
</reference>
<reference key="3">
    <citation type="journal article" date="2010" name="J. Biol. Chem.">
        <title>C1q/TNF-related protein-3 (CTRP3), a novel adipokine that regulates hepatic glucose output.</title>
        <authorList>
            <person name="Peterson J.M."/>
            <person name="Wei Z."/>
            <person name="Wong G.W."/>
        </authorList>
    </citation>
    <scope>NUCLEOTIDE SEQUENCE [MRNA] (ISOFORMS 1 AND 3)</scope>
</reference>
<reference key="4">
    <citation type="journal article" date="2003" name="Genome Res.">
        <title>The secreted protein discovery initiative (SPDI), a large-scale effort to identify novel human secreted and transmembrane proteins: a bioinformatics assessment.</title>
        <authorList>
            <person name="Clark H.F."/>
            <person name="Gurney A.L."/>
            <person name="Abaya E."/>
            <person name="Baker K."/>
            <person name="Baldwin D.T."/>
            <person name="Brush J."/>
            <person name="Chen J."/>
            <person name="Chow B."/>
            <person name="Chui C."/>
            <person name="Crowley C."/>
            <person name="Currell B."/>
            <person name="Deuel B."/>
            <person name="Dowd P."/>
            <person name="Eaton D."/>
            <person name="Foster J.S."/>
            <person name="Grimaldi C."/>
            <person name="Gu Q."/>
            <person name="Hass P.E."/>
            <person name="Heldens S."/>
            <person name="Huang A."/>
            <person name="Kim H.S."/>
            <person name="Klimowski L."/>
            <person name="Jin Y."/>
            <person name="Johnson S."/>
            <person name="Lee J."/>
            <person name="Lewis L."/>
            <person name="Liao D."/>
            <person name="Mark M.R."/>
            <person name="Robbie E."/>
            <person name="Sanchez C."/>
            <person name="Schoenfeld J."/>
            <person name="Seshagiri S."/>
            <person name="Simmons L."/>
            <person name="Singh J."/>
            <person name="Smith V."/>
            <person name="Stinson J."/>
            <person name="Vagts A."/>
            <person name="Vandlen R.L."/>
            <person name="Watanabe C."/>
            <person name="Wieand D."/>
            <person name="Woods K."/>
            <person name="Xie M.-H."/>
            <person name="Yansura D.G."/>
            <person name="Yi S."/>
            <person name="Yu G."/>
            <person name="Yuan J."/>
            <person name="Zhang M."/>
            <person name="Zhang Z."/>
            <person name="Goddard A.D."/>
            <person name="Wood W.I."/>
            <person name="Godowski P.J."/>
            <person name="Gray A.M."/>
        </authorList>
    </citation>
    <scope>NUCLEOTIDE SEQUENCE [LARGE SCALE MRNA] (ISOFORM 1)</scope>
</reference>
<reference key="5">
    <citation type="journal article" date="2004" name="Nat. Genet.">
        <title>Complete sequencing and characterization of 21,243 full-length human cDNAs.</title>
        <authorList>
            <person name="Ota T."/>
            <person name="Suzuki Y."/>
            <person name="Nishikawa T."/>
            <person name="Otsuki T."/>
            <person name="Sugiyama T."/>
            <person name="Irie R."/>
            <person name="Wakamatsu A."/>
            <person name="Hayashi K."/>
            <person name="Sato H."/>
            <person name="Nagai K."/>
            <person name="Kimura K."/>
            <person name="Makita H."/>
            <person name="Sekine M."/>
            <person name="Obayashi M."/>
            <person name="Nishi T."/>
            <person name="Shibahara T."/>
            <person name="Tanaka T."/>
            <person name="Ishii S."/>
            <person name="Yamamoto J."/>
            <person name="Saito K."/>
            <person name="Kawai Y."/>
            <person name="Isono Y."/>
            <person name="Nakamura Y."/>
            <person name="Nagahari K."/>
            <person name="Murakami K."/>
            <person name="Yasuda T."/>
            <person name="Iwayanagi T."/>
            <person name="Wagatsuma M."/>
            <person name="Shiratori A."/>
            <person name="Sudo H."/>
            <person name="Hosoiri T."/>
            <person name="Kaku Y."/>
            <person name="Kodaira H."/>
            <person name="Kondo H."/>
            <person name="Sugawara M."/>
            <person name="Takahashi M."/>
            <person name="Kanda K."/>
            <person name="Yokoi T."/>
            <person name="Furuya T."/>
            <person name="Kikkawa E."/>
            <person name="Omura Y."/>
            <person name="Abe K."/>
            <person name="Kamihara K."/>
            <person name="Katsuta N."/>
            <person name="Sato K."/>
            <person name="Tanikawa M."/>
            <person name="Yamazaki M."/>
            <person name="Ninomiya K."/>
            <person name="Ishibashi T."/>
            <person name="Yamashita H."/>
            <person name="Murakawa K."/>
            <person name="Fujimori K."/>
            <person name="Tanai H."/>
            <person name="Kimata M."/>
            <person name="Watanabe M."/>
            <person name="Hiraoka S."/>
            <person name="Chiba Y."/>
            <person name="Ishida S."/>
            <person name="Ono Y."/>
            <person name="Takiguchi S."/>
            <person name="Watanabe S."/>
            <person name="Yosida M."/>
            <person name="Hotuta T."/>
            <person name="Kusano J."/>
            <person name="Kanehori K."/>
            <person name="Takahashi-Fujii A."/>
            <person name="Hara H."/>
            <person name="Tanase T.-O."/>
            <person name="Nomura Y."/>
            <person name="Togiya S."/>
            <person name="Komai F."/>
            <person name="Hara R."/>
            <person name="Takeuchi K."/>
            <person name="Arita M."/>
            <person name="Imose N."/>
            <person name="Musashino K."/>
            <person name="Yuuki H."/>
            <person name="Oshima A."/>
            <person name="Sasaki N."/>
            <person name="Aotsuka S."/>
            <person name="Yoshikawa Y."/>
            <person name="Matsunawa H."/>
            <person name="Ichihara T."/>
            <person name="Shiohata N."/>
            <person name="Sano S."/>
            <person name="Moriya S."/>
            <person name="Momiyama H."/>
            <person name="Satoh N."/>
            <person name="Takami S."/>
            <person name="Terashima Y."/>
            <person name="Suzuki O."/>
            <person name="Nakagawa S."/>
            <person name="Senoh A."/>
            <person name="Mizoguchi H."/>
            <person name="Goto Y."/>
            <person name="Shimizu F."/>
            <person name="Wakebe H."/>
            <person name="Hishigaki H."/>
            <person name="Watanabe T."/>
            <person name="Sugiyama A."/>
            <person name="Takemoto M."/>
            <person name="Kawakami B."/>
            <person name="Yamazaki M."/>
            <person name="Watanabe K."/>
            <person name="Kumagai A."/>
            <person name="Itakura S."/>
            <person name="Fukuzumi Y."/>
            <person name="Fujimori Y."/>
            <person name="Komiyama M."/>
            <person name="Tashiro H."/>
            <person name="Tanigami A."/>
            <person name="Fujiwara T."/>
            <person name="Ono T."/>
            <person name="Yamada K."/>
            <person name="Fujii Y."/>
            <person name="Ozaki K."/>
            <person name="Hirao M."/>
            <person name="Ohmori Y."/>
            <person name="Kawabata A."/>
            <person name="Hikiji T."/>
            <person name="Kobatake N."/>
            <person name="Inagaki H."/>
            <person name="Ikema Y."/>
            <person name="Okamoto S."/>
            <person name="Okitani R."/>
            <person name="Kawakami T."/>
            <person name="Noguchi S."/>
            <person name="Itoh T."/>
            <person name="Shigeta K."/>
            <person name="Senba T."/>
            <person name="Matsumura K."/>
            <person name="Nakajima Y."/>
            <person name="Mizuno T."/>
            <person name="Morinaga M."/>
            <person name="Sasaki M."/>
            <person name="Togashi T."/>
            <person name="Oyama M."/>
            <person name="Hata H."/>
            <person name="Watanabe M."/>
            <person name="Komatsu T."/>
            <person name="Mizushima-Sugano J."/>
            <person name="Satoh T."/>
            <person name="Shirai Y."/>
            <person name="Takahashi Y."/>
            <person name="Nakagawa K."/>
            <person name="Okumura K."/>
            <person name="Nagase T."/>
            <person name="Nomura N."/>
            <person name="Kikuchi H."/>
            <person name="Masuho Y."/>
            <person name="Yamashita R."/>
            <person name="Nakai K."/>
            <person name="Yada T."/>
            <person name="Nakamura Y."/>
            <person name="Ohara O."/>
            <person name="Isogai T."/>
            <person name="Sugano S."/>
        </authorList>
    </citation>
    <scope>NUCLEOTIDE SEQUENCE [LARGE SCALE MRNA] (ISOFORM 3)</scope>
    <source>
        <tissue>Cerebellum</tissue>
        <tissue>Substantia nigra</tissue>
    </source>
</reference>
<reference key="6">
    <citation type="journal article" date="2005" name="DNA Res.">
        <title>Signal sequence and keyword trap in silico for selection of full-length human cDNAs encoding secretion or membrane proteins from oligo-capped cDNA libraries.</title>
        <authorList>
            <person name="Otsuki T."/>
            <person name="Ota T."/>
            <person name="Nishikawa T."/>
            <person name="Hayashi K."/>
            <person name="Suzuki Y."/>
            <person name="Yamamoto J."/>
            <person name="Wakamatsu A."/>
            <person name="Kimura K."/>
            <person name="Sakamoto K."/>
            <person name="Hatano N."/>
            <person name="Kawai Y."/>
            <person name="Ishii S."/>
            <person name="Saito K."/>
            <person name="Kojima S."/>
            <person name="Sugiyama T."/>
            <person name="Ono T."/>
            <person name="Okano K."/>
            <person name="Yoshikawa Y."/>
            <person name="Aotsuka S."/>
            <person name="Sasaki N."/>
            <person name="Hattori A."/>
            <person name="Okumura K."/>
            <person name="Nagai K."/>
            <person name="Sugano S."/>
            <person name="Isogai T."/>
        </authorList>
    </citation>
    <scope>NUCLEOTIDE SEQUENCE [LARGE SCALE MRNA] (ISOFORM 1)</scope>
    <source>
        <tissue>Embryo</tissue>
    </source>
</reference>
<reference key="7">
    <citation type="journal article" date="2007" name="BMC Genomics">
        <title>The full-ORF clone resource of the German cDNA consortium.</title>
        <authorList>
            <person name="Bechtel S."/>
            <person name="Rosenfelder H."/>
            <person name="Duda A."/>
            <person name="Schmidt C.P."/>
            <person name="Ernst U."/>
            <person name="Wellenreuther R."/>
            <person name="Mehrle A."/>
            <person name="Schuster C."/>
            <person name="Bahr A."/>
            <person name="Bloecker H."/>
            <person name="Heubner D."/>
            <person name="Hoerlein A."/>
            <person name="Michel G."/>
            <person name="Wedler H."/>
            <person name="Koehrer K."/>
            <person name="Ottenwaelder B."/>
            <person name="Poustka A."/>
            <person name="Wiemann S."/>
            <person name="Schupp I."/>
        </authorList>
    </citation>
    <scope>NUCLEOTIDE SEQUENCE [LARGE SCALE MRNA] (ISOFORM 2)</scope>
    <source>
        <tissue>Salivary gland</tissue>
    </source>
</reference>
<reference key="8">
    <citation type="journal article" date="2004" name="Nature">
        <title>The DNA sequence and comparative analysis of human chromosome 5.</title>
        <authorList>
            <person name="Schmutz J."/>
            <person name="Martin J."/>
            <person name="Terry A."/>
            <person name="Couronne O."/>
            <person name="Grimwood J."/>
            <person name="Lowry S."/>
            <person name="Gordon L.A."/>
            <person name="Scott D."/>
            <person name="Xie G."/>
            <person name="Huang W."/>
            <person name="Hellsten U."/>
            <person name="Tran-Gyamfi M."/>
            <person name="She X."/>
            <person name="Prabhakar S."/>
            <person name="Aerts A."/>
            <person name="Altherr M."/>
            <person name="Bajorek E."/>
            <person name="Black S."/>
            <person name="Branscomb E."/>
            <person name="Caoile C."/>
            <person name="Challacombe J.F."/>
            <person name="Chan Y.M."/>
            <person name="Denys M."/>
            <person name="Detter J.C."/>
            <person name="Escobar J."/>
            <person name="Flowers D."/>
            <person name="Fotopulos D."/>
            <person name="Glavina T."/>
            <person name="Gomez M."/>
            <person name="Gonzales E."/>
            <person name="Goodstein D."/>
            <person name="Grigoriev I."/>
            <person name="Groza M."/>
            <person name="Hammon N."/>
            <person name="Hawkins T."/>
            <person name="Haydu L."/>
            <person name="Israni S."/>
            <person name="Jett J."/>
            <person name="Kadner K."/>
            <person name="Kimball H."/>
            <person name="Kobayashi A."/>
            <person name="Lopez F."/>
            <person name="Lou Y."/>
            <person name="Martinez D."/>
            <person name="Medina C."/>
            <person name="Morgan J."/>
            <person name="Nandkeshwar R."/>
            <person name="Noonan J.P."/>
            <person name="Pitluck S."/>
            <person name="Pollard M."/>
            <person name="Predki P."/>
            <person name="Priest J."/>
            <person name="Ramirez L."/>
            <person name="Retterer J."/>
            <person name="Rodriguez A."/>
            <person name="Rogers S."/>
            <person name="Salamov A."/>
            <person name="Salazar A."/>
            <person name="Thayer N."/>
            <person name="Tice H."/>
            <person name="Tsai M."/>
            <person name="Ustaszewska A."/>
            <person name="Vo N."/>
            <person name="Wheeler J."/>
            <person name="Wu K."/>
            <person name="Yang J."/>
            <person name="Dickson M."/>
            <person name="Cheng J.-F."/>
            <person name="Eichler E.E."/>
            <person name="Olsen A."/>
            <person name="Pennacchio L.A."/>
            <person name="Rokhsar D.S."/>
            <person name="Richardson P."/>
            <person name="Lucas S.M."/>
            <person name="Myers R.M."/>
            <person name="Rubin E.M."/>
        </authorList>
    </citation>
    <scope>NUCLEOTIDE SEQUENCE [LARGE SCALE GENOMIC DNA]</scope>
</reference>
<reference key="9">
    <citation type="submission" date="2005-07" db="EMBL/GenBank/DDBJ databases">
        <authorList>
            <person name="Mural R.J."/>
            <person name="Istrail S."/>
            <person name="Sutton G.G."/>
            <person name="Florea L."/>
            <person name="Halpern A.L."/>
            <person name="Mobarry C.M."/>
            <person name="Lippert R."/>
            <person name="Walenz B."/>
            <person name="Shatkay H."/>
            <person name="Dew I."/>
            <person name="Miller J.R."/>
            <person name="Flanigan M.J."/>
            <person name="Edwards N.J."/>
            <person name="Bolanos R."/>
            <person name="Fasulo D."/>
            <person name="Halldorsson B.V."/>
            <person name="Hannenhalli S."/>
            <person name="Turner R."/>
            <person name="Yooseph S."/>
            <person name="Lu F."/>
            <person name="Nusskern D.R."/>
            <person name="Shue B.C."/>
            <person name="Zheng X.H."/>
            <person name="Zhong F."/>
            <person name="Delcher A.L."/>
            <person name="Huson D.H."/>
            <person name="Kravitz S.A."/>
            <person name="Mouchard L."/>
            <person name="Reinert K."/>
            <person name="Remington K.A."/>
            <person name="Clark A.G."/>
            <person name="Waterman M.S."/>
            <person name="Eichler E.E."/>
            <person name="Adams M.D."/>
            <person name="Hunkapiller M.W."/>
            <person name="Myers E.W."/>
            <person name="Venter J.C."/>
        </authorList>
    </citation>
    <scope>NUCLEOTIDE SEQUENCE [LARGE SCALE GENOMIC DNA]</scope>
</reference>
<reference key="10">
    <citation type="journal article" date="2004" name="Genome Res.">
        <title>The status, quality, and expansion of the NIH full-length cDNA project: the Mammalian Gene Collection (MGC).</title>
        <authorList>
            <consortium name="The MGC Project Team"/>
        </authorList>
    </citation>
    <scope>NUCLEOTIDE SEQUENCE [LARGE SCALE MRNA] (ISOFORMS 1 AND 3)</scope>
</reference>
<reference key="11">
    <citation type="submission" date="1999-08" db="EMBL/GenBank/DDBJ databases">
        <title>Homo sapiens normal aorta mRNA MST113.</title>
        <authorList>
            <person name="Hui R.T."/>
            <person name="Liu Y.Q."/>
            <person name="Wang X.Y."/>
            <person name="Qin B.M."/>
            <person name="Sheng H."/>
        </authorList>
    </citation>
    <scope>NUCLEOTIDE SEQUENCE [LARGE SCALE MRNA] OF 121-246 (ISOFORM 1)</scope>
    <source>
        <tissue>Aorta</tissue>
    </source>
</reference>
<reference key="12">
    <citation type="journal article" date="2003" name="Biochim. Biophys. Acta">
        <title>Genomic organization, promoter, amino acid sequence, chromosomal localization, and expression of the human gene for CORS-26 (collagenous repeat-containing sequence of 26-kDa protein).</title>
        <authorList>
            <person name="Schaffler A."/>
            <person name="Ehling A."/>
            <person name="Neumann E."/>
            <person name="Herfarth H."/>
            <person name="Paul G."/>
            <person name="Tarner I."/>
            <person name="Gay S."/>
            <person name="Scholmerich J."/>
            <person name="Muller-Ladner U."/>
        </authorList>
    </citation>
    <scope>TISSUE SPECIFICITY</scope>
</reference>
<reference key="13">
    <citation type="journal article" date="2009" name="Mol. Cell. Proteomics">
        <title>A strategy for precise and large scale identification of core fucosylated glycoproteins.</title>
        <authorList>
            <person name="Jia W."/>
            <person name="Lu Z."/>
            <person name="Fu Y."/>
            <person name="Wang H.P."/>
            <person name="Wang L.H."/>
            <person name="Chi H."/>
            <person name="Yuan Z.F."/>
            <person name="Zheng Z.B."/>
            <person name="Song L.N."/>
            <person name="Han H.H."/>
            <person name="Liang Y.M."/>
            <person name="Wang J.L."/>
            <person name="Cai Y."/>
            <person name="Zhang Y.K."/>
            <person name="Deng Y.L."/>
            <person name="Ying W.T."/>
            <person name="He S.M."/>
            <person name="Qian X.H."/>
        </authorList>
    </citation>
    <scope>GLYCOSYLATION AT ASN-70 (ISOFORM 3)</scope>
</reference>
<feature type="signal peptide" evidence="1">
    <location>
        <begin position="1"/>
        <end position="22"/>
    </location>
</feature>
<feature type="chain" id="PRO_0000003531" description="Complement C1q tumor necrosis factor-related protein 3">
    <location>
        <begin position="23"/>
        <end position="246"/>
    </location>
</feature>
<feature type="domain" description="Collagen-like">
    <location>
        <begin position="51"/>
        <end position="113"/>
    </location>
</feature>
<feature type="domain" description="C1q" evidence="2">
    <location>
        <begin position="113"/>
        <end position="246"/>
    </location>
</feature>
<feature type="region of interest" description="Disordered" evidence="3">
    <location>
        <begin position="53"/>
        <end position="110"/>
    </location>
</feature>
<feature type="compositionally biased region" description="Pro residues" evidence="3">
    <location>
        <begin position="55"/>
        <end position="64"/>
    </location>
</feature>
<feature type="compositionally biased region" description="Low complexity" evidence="3">
    <location>
        <begin position="65"/>
        <end position="74"/>
    </location>
</feature>
<feature type="compositionally biased region" description="Basic and acidic residues" evidence="3">
    <location>
        <begin position="80"/>
        <end position="107"/>
    </location>
</feature>
<feature type="splice variant" id="VSP_043157" description="In isoform 3." evidence="5 6 8">
    <original>E</original>
    <variation>EVSGRTNKVVARIVQSHQQTGRSGSRREKVRERSHPKTGTVDNNTSTDLKSLRPDELPHPEVDDLAQITTFWGQ</variation>
    <location>
        <position position="28"/>
    </location>
</feature>
<feature type="splice variant" id="VSP_011624" description="In isoform 2." evidence="7">
    <location>
        <begin position="46"/>
        <end position="69"/>
    </location>
</feature>
<feature type="splice variant" id="VSP_011625" description="In isoform 2." evidence="7">
    <location>
        <begin position="82"/>
        <end position="105"/>
    </location>
</feature>
<feature type="glycosylation site" description="N-linked (GlcNAc...) asparagine" evidence="9">
    <location sequence="Q9BXJ4-3">
        <position position="70"/>
    </location>
</feature>
<evidence type="ECO:0000255" key="1"/>
<evidence type="ECO:0000255" key="2">
    <source>
        <dbReference type="PROSITE-ProRule" id="PRU00368"/>
    </source>
</evidence>
<evidence type="ECO:0000256" key="3">
    <source>
        <dbReference type="SAM" id="MobiDB-lite"/>
    </source>
</evidence>
<evidence type="ECO:0000269" key="4">
    <source>
    </source>
</evidence>
<evidence type="ECO:0000303" key="5">
    <source>
    </source>
</evidence>
<evidence type="ECO:0000303" key="6">
    <source>
    </source>
</evidence>
<evidence type="ECO:0000303" key="7">
    <source>
    </source>
</evidence>
<evidence type="ECO:0000303" key="8">
    <source>
    </source>
</evidence>
<evidence type="ECO:0000305" key="9"/>
<proteinExistence type="evidence at protein level"/>